<proteinExistence type="inferred from homology"/>
<keyword id="KW-0560">Oxidoreductase</keyword>
<keyword id="KW-0663">Pyridoxal phosphate</keyword>
<evidence type="ECO:0000255" key="1">
    <source>
        <dbReference type="HAMAP-Rule" id="MF_00713"/>
    </source>
</evidence>
<reference key="1">
    <citation type="journal article" date="2004" name="Nat. Genet.">
        <title>Evidence in the Legionella pneumophila genome for exploitation of host cell functions and high genome plasticity.</title>
        <authorList>
            <person name="Cazalet C."/>
            <person name="Rusniok C."/>
            <person name="Brueggemann H."/>
            <person name="Zidane N."/>
            <person name="Magnier A."/>
            <person name="Ma L."/>
            <person name="Tichit M."/>
            <person name="Jarraud S."/>
            <person name="Bouchier C."/>
            <person name="Vandenesch F."/>
            <person name="Kunst F."/>
            <person name="Etienne J."/>
            <person name="Glaser P."/>
            <person name="Buchrieser C."/>
        </authorList>
    </citation>
    <scope>NUCLEOTIDE SEQUENCE [LARGE SCALE GENOMIC DNA]</scope>
    <source>
        <strain>Paris</strain>
    </source>
</reference>
<feature type="chain" id="PRO_1000045693" description="Probable glycine dehydrogenase (decarboxylating) subunit 2">
    <location>
        <begin position="1"/>
        <end position="484"/>
    </location>
</feature>
<feature type="modified residue" description="N6-(pyridoxal phosphate)lysine" evidence="1">
    <location>
        <position position="264"/>
    </location>
</feature>
<comment type="function">
    <text evidence="1">The glycine cleavage system catalyzes the degradation of glycine. The P protein binds the alpha-amino group of glycine through its pyridoxal phosphate cofactor; CO(2) is released and the remaining methylamine moiety is then transferred to the lipoamide cofactor of the H protein.</text>
</comment>
<comment type="catalytic activity">
    <reaction evidence="1">
        <text>N(6)-[(R)-lipoyl]-L-lysyl-[glycine-cleavage complex H protein] + glycine + H(+) = N(6)-[(R)-S(8)-aminomethyldihydrolipoyl]-L-lysyl-[glycine-cleavage complex H protein] + CO2</text>
        <dbReference type="Rhea" id="RHEA:24304"/>
        <dbReference type="Rhea" id="RHEA-COMP:10494"/>
        <dbReference type="Rhea" id="RHEA-COMP:10495"/>
        <dbReference type="ChEBI" id="CHEBI:15378"/>
        <dbReference type="ChEBI" id="CHEBI:16526"/>
        <dbReference type="ChEBI" id="CHEBI:57305"/>
        <dbReference type="ChEBI" id="CHEBI:83099"/>
        <dbReference type="ChEBI" id="CHEBI:83143"/>
        <dbReference type="EC" id="1.4.4.2"/>
    </reaction>
</comment>
<comment type="cofactor">
    <cofactor evidence="1">
        <name>pyridoxal 5'-phosphate</name>
        <dbReference type="ChEBI" id="CHEBI:597326"/>
    </cofactor>
</comment>
<comment type="subunit">
    <text evidence="1">The glycine cleavage system is composed of four proteins: P, T, L and H. In this organism, the P 'protein' is a heterodimer of two subunits.</text>
</comment>
<comment type="similarity">
    <text evidence="1">Belongs to the GcvP family. C-terminal subunit subfamily.</text>
</comment>
<name>GCSPB_LEGPA</name>
<protein>
    <recommendedName>
        <fullName evidence="1">Probable glycine dehydrogenase (decarboxylating) subunit 2</fullName>
        <ecNumber evidence="1">1.4.4.2</ecNumber>
    </recommendedName>
    <alternativeName>
        <fullName evidence="1">Glycine cleavage system P-protein subunit 2</fullName>
    </alternativeName>
    <alternativeName>
        <fullName evidence="1">Glycine decarboxylase subunit 2</fullName>
    </alternativeName>
    <alternativeName>
        <fullName evidence="1">Glycine dehydrogenase (aminomethyl-transferring) subunit 2</fullName>
    </alternativeName>
</protein>
<dbReference type="EC" id="1.4.4.2" evidence="1"/>
<dbReference type="EMBL" id="CR628336">
    <property type="protein sequence ID" value="CAH11276.1"/>
    <property type="molecule type" value="Genomic_DNA"/>
</dbReference>
<dbReference type="RefSeq" id="WP_011212766.1">
    <property type="nucleotide sequence ID" value="NC_006368.1"/>
</dbReference>
<dbReference type="SMR" id="Q5X8W5"/>
<dbReference type="KEGG" id="lpp:lpp0128"/>
<dbReference type="LegioList" id="lpp0128"/>
<dbReference type="HOGENOM" id="CLU_004620_5_0_6"/>
<dbReference type="GO" id="GO:0005829">
    <property type="term" value="C:cytosol"/>
    <property type="evidence" value="ECO:0007669"/>
    <property type="project" value="TreeGrafter"/>
</dbReference>
<dbReference type="GO" id="GO:0005960">
    <property type="term" value="C:glycine cleavage complex"/>
    <property type="evidence" value="ECO:0007669"/>
    <property type="project" value="TreeGrafter"/>
</dbReference>
<dbReference type="GO" id="GO:0016594">
    <property type="term" value="F:glycine binding"/>
    <property type="evidence" value="ECO:0007669"/>
    <property type="project" value="TreeGrafter"/>
</dbReference>
<dbReference type="GO" id="GO:0004375">
    <property type="term" value="F:glycine dehydrogenase (decarboxylating) activity"/>
    <property type="evidence" value="ECO:0007669"/>
    <property type="project" value="UniProtKB-EC"/>
</dbReference>
<dbReference type="GO" id="GO:0030170">
    <property type="term" value="F:pyridoxal phosphate binding"/>
    <property type="evidence" value="ECO:0007669"/>
    <property type="project" value="TreeGrafter"/>
</dbReference>
<dbReference type="GO" id="GO:0019464">
    <property type="term" value="P:glycine decarboxylation via glycine cleavage system"/>
    <property type="evidence" value="ECO:0007669"/>
    <property type="project" value="UniProtKB-UniRule"/>
</dbReference>
<dbReference type="FunFam" id="3.40.640.10:FF:000224">
    <property type="entry name" value="Probable glycine dehydrogenase (decarboxylating) subunit 2"/>
    <property type="match status" value="1"/>
</dbReference>
<dbReference type="FunFam" id="3.90.1150.10:FF:000014">
    <property type="entry name" value="Probable glycine dehydrogenase (decarboxylating) subunit 2"/>
    <property type="match status" value="1"/>
</dbReference>
<dbReference type="Gene3D" id="6.20.440.10">
    <property type="match status" value="1"/>
</dbReference>
<dbReference type="Gene3D" id="3.90.1150.10">
    <property type="entry name" value="Aspartate Aminotransferase, domain 1"/>
    <property type="match status" value="1"/>
</dbReference>
<dbReference type="Gene3D" id="3.40.640.10">
    <property type="entry name" value="Type I PLP-dependent aspartate aminotransferase-like (Major domain)"/>
    <property type="match status" value="1"/>
</dbReference>
<dbReference type="HAMAP" id="MF_00713">
    <property type="entry name" value="GcvPB"/>
    <property type="match status" value="1"/>
</dbReference>
<dbReference type="InterPro" id="IPR000192">
    <property type="entry name" value="Aminotrans_V_dom"/>
</dbReference>
<dbReference type="InterPro" id="IPR023012">
    <property type="entry name" value="GcvPB"/>
</dbReference>
<dbReference type="InterPro" id="IPR049316">
    <property type="entry name" value="GDC-P_C"/>
</dbReference>
<dbReference type="InterPro" id="IPR020581">
    <property type="entry name" value="GDC_P"/>
</dbReference>
<dbReference type="InterPro" id="IPR015424">
    <property type="entry name" value="PyrdxlP-dep_Trfase"/>
</dbReference>
<dbReference type="InterPro" id="IPR015421">
    <property type="entry name" value="PyrdxlP-dep_Trfase_major"/>
</dbReference>
<dbReference type="InterPro" id="IPR015422">
    <property type="entry name" value="PyrdxlP-dep_Trfase_small"/>
</dbReference>
<dbReference type="NCBIfam" id="NF003346">
    <property type="entry name" value="PRK04366.1"/>
    <property type="match status" value="1"/>
</dbReference>
<dbReference type="PANTHER" id="PTHR11773:SF1">
    <property type="entry name" value="GLYCINE DEHYDROGENASE (DECARBOXYLATING), MITOCHONDRIAL"/>
    <property type="match status" value="1"/>
</dbReference>
<dbReference type="PANTHER" id="PTHR11773">
    <property type="entry name" value="GLYCINE DEHYDROGENASE, DECARBOXYLATING"/>
    <property type="match status" value="1"/>
</dbReference>
<dbReference type="Pfam" id="PF00266">
    <property type="entry name" value="Aminotran_5"/>
    <property type="match status" value="1"/>
</dbReference>
<dbReference type="Pfam" id="PF21478">
    <property type="entry name" value="GcvP2_C"/>
    <property type="match status" value="1"/>
</dbReference>
<dbReference type="SUPFAM" id="SSF53383">
    <property type="entry name" value="PLP-dependent transferases"/>
    <property type="match status" value="1"/>
</dbReference>
<sequence length="484" mass="53362">MLIFELSKTGRQAKAQIPRAVSKNYSIPEEFQRKSPPRLPACSELQVVRHFTCLSQKNFSIDTNFYPLGSCTMKYNPRGVHKAASLPGFINRHPLAMDNESQGFLETLYKLQNYISEITGMPGVSLTPMAGSQGEFAGVAMIKAYHQSRGDTARDEILIPDAAHGTNPASAVMCGFKVVEIATAPDGDIDLDELKRKVGPRTAGIMLTNPSTLGLFMRQIKEIANLVHQAGGLLYYDGANLNAILGKVRPGDMGFDVMHLNLHKTFATPHGGGGPGAGPVAVGKRLIPYMPLPVVKKTDSGYHWATRQDYPQSIGRLSCFMGNAGILLRAYFYMLVLGKEGLLRVSEFATLNANYLLKELTKVGYTAAYPGRRASHEFILTLNSEKKNYDVTAMDFAKRLLDYGVHAPTTYFPLLVPECLLIEPPETESKEELDAFVAVMKTIREEAIKQPDILKAAPHTLPVKRLDDVKAARELDLNYFATHE</sequence>
<organism>
    <name type="scientific">Legionella pneumophila (strain Paris)</name>
    <dbReference type="NCBI Taxonomy" id="297246"/>
    <lineage>
        <taxon>Bacteria</taxon>
        <taxon>Pseudomonadati</taxon>
        <taxon>Pseudomonadota</taxon>
        <taxon>Gammaproteobacteria</taxon>
        <taxon>Legionellales</taxon>
        <taxon>Legionellaceae</taxon>
        <taxon>Legionella</taxon>
    </lineage>
</organism>
<gene>
    <name evidence="1" type="primary">gcvPB</name>
    <name type="ordered locus">lpp0128</name>
</gene>
<accession>Q5X8W5</accession>